<protein>
    <recommendedName>
        <fullName evidence="6">Long form salivary protein D7L2</fullName>
        <shortName evidence="5">AngaD7L2</shortName>
    </recommendedName>
</protein>
<reference evidence="7" key="1">
    <citation type="journal article" date="2002" name="Science">
        <title>The genome sequence of the malaria mosquito Anopheles gambiae.</title>
        <authorList>
            <person name="Holt R.A."/>
            <person name="Subramanian G.M."/>
            <person name="Halpern A."/>
            <person name="Sutton G.G."/>
            <person name="Charlab R."/>
            <person name="Nusskern D.R."/>
            <person name="Wincker P."/>
            <person name="Clark A.G."/>
            <person name="Ribeiro J.M.C."/>
            <person name="Wides R."/>
            <person name="Salzberg S.L."/>
            <person name="Loftus B.J."/>
            <person name="Yandell M.D."/>
            <person name="Majoros W.H."/>
            <person name="Rusch D.B."/>
            <person name="Lai Z."/>
            <person name="Kraft C.L."/>
            <person name="Abril J.F."/>
            <person name="Anthouard V."/>
            <person name="Arensburger P."/>
            <person name="Atkinson P.W."/>
            <person name="Baden H."/>
            <person name="de Berardinis V."/>
            <person name="Baldwin D."/>
            <person name="Benes V."/>
            <person name="Biedler J."/>
            <person name="Blass C."/>
            <person name="Bolanos R."/>
            <person name="Boscus D."/>
            <person name="Barnstead M."/>
            <person name="Cai S."/>
            <person name="Center A."/>
            <person name="Chaturverdi K."/>
            <person name="Christophides G.K."/>
            <person name="Chrystal M.A.M."/>
            <person name="Clamp M."/>
            <person name="Cravchik A."/>
            <person name="Curwen V."/>
            <person name="Dana A."/>
            <person name="Delcher A."/>
            <person name="Dew I."/>
            <person name="Evans C.A."/>
            <person name="Flanigan M."/>
            <person name="Grundschober-Freimoser A."/>
            <person name="Friedli L."/>
            <person name="Gu Z."/>
            <person name="Guan P."/>
            <person name="Guigo R."/>
            <person name="Hillenmeyer M.E."/>
            <person name="Hladun S.L."/>
            <person name="Hogan J.R."/>
            <person name="Hong Y.S."/>
            <person name="Hoover J."/>
            <person name="Jaillon O."/>
            <person name="Ke Z."/>
            <person name="Kodira C.D."/>
            <person name="Kokoza E."/>
            <person name="Koutsos A."/>
            <person name="Letunic I."/>
            <person name="Levitsky A.A."/>
            <person name="Liang Y."/>
            <person name="Lin J.-J."/>
            <person name="Lobo N.F."/>
            <person name="Lopez J.R."/>
            <person name="Malek J.A."/>
            <person name="McIntosh T.C."/>
            <person name="Meister S."/>
            <person name="Miller J.R."/>
            <person name="Mobarry C."/>
            <person name="Mongin E."/>
            <person name="Murphy S.D."/>
            <person name="O'Brochta D.A."/>
            <person name="Pfannkoch C."/>
            <person name="Qi R."/>
            <person name="Regier M.A."/>
            <person name="Remington K."/>
            <person name="Shao H."/>
            <person name="Sharakhova M.V."/>
            <person name="Sitter C.D."/>
            <person name="Shetty J."/>
            <person name="Smith T.J."/>
            <person name="Strong R."/>
            <person name="Sun J."/>
            <person name="Thomasova D."/>
            <person name="Ton L.Q."/>
            <person name="Topalis P."/>
            <person name="Tu Z.J."/>
            <person name="Unger M.F."/>
            <person name="Walenz B."/>
            <person name="Wang A.H."/>
            <person name="Wang J."/>
            <person name="Wang M."/>
            <person name="Wang X."/>
            <person name="Woodford K.J."/>
            <person name="Wortman J.R."/>
            <person name="Wu M."/>
            <person name="Yao A."/>
            <person name="Zdobnov E.M."/>
            <person name="Zhang H."/>
            <person name="Zhao Q."/>
            <person name="Zhao S."/>
            <person name="Zhu S.C."/>
            <person name="Zhimulev I."/>
            <person name="Coluzzi M."/>
            <person name="della Torre A."/>
            <person name="Roth C.W."/>
            <person name="Louis C."/>
            <person name="Kalush F."/>
            <person name="Mural R.J."/>
            <person name="Myers E.W."/>
            <person name="Adams M.D."/>
            <person name="Smith H.O."/>
            <person name="Broder S."/>
            <person name="Gardner M.J."/>
            <person name="Fraser C.M."/>
            <person name="Birney E."/>
            <person name="Bork P."/>
            <person name="Brey P.T."/>
            <person name="Venter J.C."/>
            <person name="Weissenbach J."/>
            <person name="Kafatos F.C."/>
            <person name="Collins F.H."/>
            <person name="Hoffman S.L."/>
        </authorList>
    </citation>
    <scope>NUCLEOTIDE SEQUENCE [LARGE SCALE GENOMIC DNA]</scope>
    <source>
        <strain evidence="7">PEST</strain>
    </source>
</reference>
<reference evidence="6" key="2">
    <citation type="journal article" date="2022" name="J. Biol. Chem.">
        <title>Novel salivary antihemostatic activities of long-form D7 proteins from the malaria vector Anopheles gambiae facilitate hematophagy.</title>
        <authorList>
            <person name="Smith L.B."/>
            <person name="Duge E."/>
            <person name="Valenzuela-Leon P.C."/>
            <person name="Brooks S."/>
            <person name="Martin-Martin I."/>
            <person name="Ackerman H."/>
            <person name="Calvo E."/>
        </authorList>
    </citation>
    <scope>FUNCTION</scope>
    <scope>INTERACTION WITH HOST F12 AND F11</scope>
</reference>
<organism evidence="7">
    <name type="scientific">Anopheles gambiae</name>
    <name type="common">African malaria mosquito</name>
    <dbReference type="NCBI Taxonomy" id="7165"/>
    <lineage>
        <taxon>Eukaryota</taxon>
        <taxon>Metazoa</taxon>
        <taxon>Ecdysozoa</taxon>
        <taxon>Arthropoda</taxon>
        <taxon>Hexapoda</taxon>
        <taxon>Insecta</taxon>
        <taxon>Pterygota</taxon>
        <taxon>Neoptera</taxon>
        <taxon>Endopterygota</taxon>
        <taxon>Diptera</taxon>
        <taxon>Nematocera</taxon>
        <taxon>Culicoidea</taxon>
        <taxon>Culicidae</taxon>
        <taxon>Anophelinae</taxon>
        <taxon>Anopheles</taxon>
    </lineage>
</organism>
<evidence type="ECO:0000250" key="1">
    <source>
        <dbReference type="UniProtKB" id="Q0IF93"/>
    </source>
</evidence>
<evidence type="ECO:0000250" key="2">
    <source>
        <dbReference type="UniProtKB" id="Q95NY5"/>
    </source>
</evidence>
<evidence type="ECO:0000255" key="3"/>
<evidence type="ECO:0000269" key="4">
    <source>
    </source>
</evidence>
<evidence type="ECO:0000303" key="5">
    <source>
    </source>
</evidence>
<evidence type="ECO:0000305" key="6"/>
<evidence type="ECO:0000312" key="7">
    <source>
        <dbReference type="Proteomes" id="UP000007062"/>
    </source>
</evidence>
<feature type="signal peptide" evidence="3">
    <location>
        <begin position="1"/>
        <end position="18"/>
    </location>
</feature>
<feature type="chain" id="PRO_0000460139" description="Long form salivary protein D7L2" evidence="3">
    <location>
        <begin position="19"/>
        <end position="315"/>
    </location>
</feature>
<feature type="disulfide bond" evidence="2">
    <location>
        <begin position="37"/>
        <end position="73"/>
    </location>
</feature>
<feature type="disulfide bond" evidence="2">
    <location>
        <begin position="69"/>
        <end position="128"/>
    </location>
</feature>
<feature type="disulfide bond" evidence="2">
    <location>
        <begin position="178"/>
        <end position="211"/>
    </location>
</feature>
<feature type="disulfide bond" evidence="2">
    <location>
        <begin position="252"/>
        <end position="263"/>
    </location>
</feature>
<proteinExistence type="evidence at protein level"/>
<keyword id="KW-1203">Blood coagulation cascade inhibiting toxin</keyword>
<keyword id="KW-1015">Disulfide bond</keyword>
<keyword id="KW-1199">Hemostasis impairing toxin</keyword>
<keyword id="KW-1185">Reference proteome</keyword>
<keyword id="KW-0964">Secreted</keyword>
<keyword id="KW-0732">Signal</keyword>
<keyword id="KW-0800">Toxin</keyword>
<name>D7L2_ANOGA</name>
<sequence>MIVAPVVLSIFLQLFVQAAQPWKALDPEQALYVYKRCYEDHLPAGSSRVTYLKSWNAWKLEPNDAVTHCYAKCVLIGLQLYEEKDKAFKSERIPVQHEAYKTLNEANSREVTEYQQALASINAGDGSCVALYNAYLPVHNKFVDLSRKLYHGTVEGAAKIYAAMPQIKQKGESFFAYCAKKIWGGYNKKEWKRGRNYELSGSSQFKKVIDCIFRGLRYMDDSGLKVDEVVRDFNLINKSDLEPEVRSVLASCTGTQAYDYYSCLLNSPVKEDFKNAFDFHELRSADYAFLLRGKVYEGPEQVKEEMKHLNTTVHF</sequence>
<gene>
    <name evidence="6" type="primary">D7L2</name>
</gene>
<comment type="function">
    <text evidence="1 4">Modulates blood feeding of female mosquitoes on vertebrate species by binding and sequestering different mediators involved in the host response (By similarity). Binds leukotriene B4 and leukotriene D4 (PubMed:35460690). Exhibits anticoagulant activity targeting the intrinsic coagulation pathway; binds coagulation factors XII and XI, preventing generation of activated FXIIa and FXIa (PubMed:35460690).</text>
</comment>
<comment type="subunit">
    <text evidence="4">Interacts with host coagulation factor XII/F12 (inactive and activated) (PubMed:35460690). Interacts with host coagulation factor XI/F11 (inactive) (PubMed:35460690).</text>
</comment>
<comment type="subcellular location">
    <subcellularLocation>
        <location evidence="1">Secreted</location>
    </subcellularLocation>
</comment>
<comment type="similarity">
    <text evidence="6">Belongs to the PBP/GOBP family.</text>
</comment>
<accession>A0A1S4GYJ6</accession>
<dbReference type="EMBL" id="AAAB01008964">
    <property type="status" value="NOT_ANNOTATED_CDS"/>
    <property type="molecule type" value="Genomic_DNA"/>
</dbReference>
<dbReference type="SMR" id="A0A1S4GYJ6"/>
<dbReference type="EnsemblMetazoa" id="AGAP008279-RA">
    <property type="protein sequence ID" value="AGAP008279-PA"/>
    <property type="gene ID" value="AGAP008279"/>
</dbReference>
<dbReference type="VEuPathDB" id="VectorBase:AGAMI1_010889"/>
<dbReference type="VEuPathDB" id="VectorBase:AGAP008279"/>
<dbReference type="InParanoid" id="A0A1S4GYJ6"/>
<dbReference type="OMA" id="CYAKCVL"/>
<dbReference type="Proteomes" id="UP000007062">
    <property type="component" value="Chromosome 3R"/>
</dbReference>
<dbReference type="GO" id="GO:0005576">
    <property type="term" value="C:extracellular region"/>
    <property type="evidence" value="ECO:0007669"/>
    <property type="project" value="UniProtKB-SubCell"/>
</dbReference>
<dbReference type="GO" id="GO:0005549">
    <property type="term" value="F:odorant binding"/>
    <property type="evidence" value="ECO:0007669"/>
    <property type="project" value="InterPro"/>
</dbReference>
<dbReference type="GO" id="GO:0090729">
    <property type="term" value="F:toxin activity"/>
    <property type="evidence" value="ECO:0007669"/>
    <property type="project" value="UniProtKB-KW"/>
</dbReference>
<dbReference type="CDD" id="cd23992">
    <property type="entry name" value="PBP_GOBP"/>
    <property type="match status" value="1"/>
</dbReference>
<dbReference type="FunFam" id="1.10.238.20:FF:000029">
    <property type="entry name" value="AGAP008278-PA"/>
    <property type="match status" value="1"/>
</dbReference>
<dbReference type="Gene3D" id="1.10.238.20">
    <property type="entry name" value="Pheromone/general odorant binding protein domain"/>
    <property type="match status" value="2"/>
</dbReference>
<dbReference type="InterPro" id="IPR006170">
    <property type="entry name" value="PBP/GOBP"/>
</dbReference>
<dbReference type="InterPro" id="IPR036728">
    <property type="entry name" value="PBP_GOBP_sf"/>
</dbReference>
<dbReference type="PANTHER" id="PTHR11857:SF43">
    <property type="entry name" value="GEO07291P1-RELATED"/>
    <property type="match status" value="1"/>
</dbReference>
<dbReference type="PANTHER" id="PTHR11857">
    <property type="entry name" value="ODORANT BINDING PROTEIN-RELATED"/>
    <property type="match status" value="1"/>
</dbReference>
<dbReference type="Pfam" id="PF01395">
    <property type="entry name" value="PBP_GOBP"/>
    <property type="match status" value="1"/>
</dbReference>
<dbReference type="SUPFAM" id="SSF47565">
    <property type="entry name" value="Insect pheromone/odorant-binding proteins"/>
    <property type="match status" value="2"/>
</dbReference>